<evidence type="ECO:0000250" key="1">
    <source>
        <dbReference type="UniProtKB" id="P08839"/>
    </source>
</evidence>
<evidence type="ECO:0000250" key="2">
    <source>
        <dbReference type="UniProtKB" id="P23533"/>
    </source>
</evidence>
<evidence type="ECO:0000303" key="3">
    <source>
    </source>
</evidence>
<evidence type="ECO:0000305" key="4"/>
<evidence type="ECO:0000305" key="5">
    <source>
    </source>
</evidence>
<reference key="1">
    <citation type="journal article" date="1991" name="J. Bacteriol.">
        <title>Identification and characterization of two Alcaligenes eutrophus gene loci relevant to the poly(beta-hydroxybutyric acid)-leaky phenotype which exhibit homology to ptsH and ptsI of Escherichia coli.</title>
        <authorList>
            <person name="Pries A."/>
            <person name="Priefert H."/>
            <person name="Krueger N."/>
            <person name="Steinbuechel A."/>
        </authorList>
    </citation>
    <scope>NUCLEOTIDE SEQUENCE [GENOMIC DNA]</scope>
    <scope>FUNCTION</scope>
</reference>
<reference key="2">
    <citation type="journal article" date="2006" name="Nat. Biotechnol.">
        <title>Genome sequence of the bioplastic-producing 'Knallgas' bacterium Ralstonia eutropha H16.</title>
        <authorList>
            <person name="Pohlmann A."/>
            <person name="Fricke W.F."/>
            <person name="Reinecke F."/>
            <person name="Kusian B."/>
            <person name="Liesegang H."/>
            <person name="Cramm R."/>
            <person name="Eitinger T."/>
            <person name="Ewering C."/>
            <person name="Poetter M."/>
            <person name="Schwartz E."/>
            <person name="Strittmatter A."/>
            <person name="Voss I."/>
            <person name="Gottschalk G."/>
            <person name="Steinbuechel A."/>
            <person name="Friedrich B."/>
            <person name="Bowien B."/>
        </authorList>
    </citation>
    <scope>NUCLEOTIDE SEQUENCE [LARGE SCALE GENOMIC DNA]</scope>
    <source>
        <strain>ATCC 17699 / DSM 428 / KCTC 22496 / NCIMB 10442 / H16 / Stanier 337</strain>
    </source>
</reference>
<comment type="function">
    <text evidence="1 5">General (non sugar-specific) component of the phosphoenolpyruvate-dependent sugar phosphotransferase system (sugar PTS). This major carbohydrate active-transport system catalyzes the phosphorylation of incoming sugar substrates concomitantly with their translocation across the cell membrane. Enzyme I transfers the phosphoryl group from phosphoenolpyruvate (PEP) to the phosphoryl carrier protein (HPr).</text>
</comment>
<comment type="catalytic activity">
    <reaction evidence="1">
        <text>L-histidyl-[protein] + phosphoenolpyruvate = N(pros)-phospho-L-histidyl-[protein] + pyruvate</text>
        <dbReference type="Rhea" id="RHEA:23880"/>
        <dbReference type="Rhea" id="RHEA-COMP:9745"/>
        <dbReference type="Rhea" id="RHEA-COMP:9746"/>
        <dbReference type="ChEBI" id="CHEBI:15361"/>
        <dbReference type="ChEBI" id="CHEBI:29979"/>
        <dbReference type="ChEBI" id="CHEBI:58702"/>
        <dbReference type="ChEBI" id="CHEBI:64837"/>
        <dbReference type="EC" id="2.7.3.9"/>
    </reaction>
</comment>
<comment type="cofactor">
    <cofactor evidence="1">
        <name>Mg(2+)</name>
        <dbReference type="ChEBI" id="CHEBI:18420"/>
    </cofactor>
</comment>
<comment type="subunit">
    <text evidence="1">Homodimer.</text>
</comment>
<comment type="subcellular location">
    <subcellularLocation>
        <location evidence="4">Cytoplasm</location>
    </subcellularLocation>
</comment>
<comment type="domain">
    <text evidence="1">The N-terminal domain contains the HPr binding site, the central domain the pyrophosphate/phosphate carrier histidine, and the C-terminal domain the pyruvate binding site.</text>
</comment>
<comment type="miscellaneous">
    <text evidence="1">The reaction takes place in three steps, mediated by a phosphocarrier histidine residue located on the surface of the central domain. The two first partial reactions are catalyzed at an active site located on the N-terminal domain, and the third partial reaction is catalyzed at an active site located on the C-terminal domain. For catalytic turnover, the central domain swivels from the concave surface of the N-terminal domain to that of the C-terminal domain.</text>
</comment>
<comment type="similarity">
    <text evidence="4">Belongs to the PEP-utilizing enzyme family.</text>
</comment>
<name>PT1_CUPNH</name>
<keyword id="KW-0963">Cytoplasm</keyword>
<keyword id="KW-0418">Kinase</keyword>
<keyword id="KW-0460">Magnesium</keyword>
<keyword id="KW-0479">Metal-binding</keyword>
<keyword id="KW-0598">Phosphotransferase system</keyword>
<keyword id="KW-1185">Reference proteome</keyword>
<keyword id="KW-0762">Sugar transport</keyword>
<keyword id="KW-0808">Transferase</keyword>
<keyword id="KW-0813">Transport</keyword>
<sequence length="586" mass="64300">MPFALHGIPVSRGVAIGRAHLLAPAALDVSHYLVDEDQLDAEVERLRAARAAVRAELAALKRDLPRDAPEELGAFLDVHAMILDDEALAREPEALIRGRRYNAEWALTTRLEELMRQFDEIEDEYLRERKTDIRQVVERILKALAGAPVLVPAPVPALAADGEAATGVIVVAHDIAPADMLQFRHTVFHGFVTDMGGRTSHTAIVARSLDIPAAVGVQSASELIRQDDWIIIDGDAGLVIVDPTAIILEEYRHRQSERALEKKRLQRLRHTPAVTLDGLEIDLLANIEMAEDAGAALAAGAVGVGLFRSEFLFMNRRDELPGEDEQFQAYRGAVDAMHGLPVTIRTIDIGADKPLDARGDEFETALNPALGLRAIRWSLSEPGMFLTQLRALLRASAFGPVRLLVPMLAHASEIDQTLALIAKAKRQLDERGEAYDPGMKVGAMIEIPAAVLLLPLFLRKMDFLSIGTNDLIQYTLAIDRADNAVAHLFDPLHPAVLQLVARTIREANRAGVPVAVCGEMAGDPSMTRLLLGMGLREFSMHPAQLLRVKQEILHAHCERLEPLVDQVLQAFDPEEQAAALRQLARP</sequence>
<proteinExistence type="inferred from homology"/>
<protein>
    <recommendedName>
        <fullName evidence="3">Phosphoenolpyruvate-protein phosphotransferase</fullName>
        <ecNumber evidence="1">2.7.3.9</ecNumber>
    </recommendedName>
    <alternativeName>
        <fullName evidence="3">Phosphotransferase system, enzyme I</fullName>
    </alternativeName>
</protein>
<accession>P23536</accession>
<accession>Q0KEU4</accession>
<feature type="chain" id="PRO_0000147053" description="Phosphoenolpyruvate-protein phosphotransferase">
    <location>
        <begin position="1"/>
        <end position="586"/>
    </location>
</feature>
<feature type="active site" description="Tele-phosphohistidine intermediate" evidence="1">
    <location>
        <position position="201"/>
    </location>
</feature>
<feature type="active site" description="Proton donor" evidence="1">
    <location>
        <position position="517"/>
    </location>
</feature>
<feature type="binding site" evidence="2">
    <location>
        <position position="308"/>
    </location>
    <ligand>
        <name>phosphoenolpyruvate</name>
        <dbReference type="ChEBI" id="CHEBI:58702"/>
    </ligand>
</feature>
<feature type="binding site" evidence="1">
    <location>
        <position position="345"/>
    </location>
    <ligand>
        <name>phosphoenolpyruvate</name>
        <dbReference type="ChEBI" id="CHEBI:58702"/>
    </ligand>
</feature>
<feature type="binding site" evidence="1">
    <location>
        <position position="446"/>
    </location>
    <ligand>
        <name>Mg(2+)</name>
        <dbReference type="ChEBI" id="CHEBI:18420"/>
    </ligand>
</feature>
<feature type="binding site" evidence="1">
    <location>
        <begin position="469"/>
        <end position="470"/>
    </location>
    <ligand>
        <name>phosphoenolpyruvate</name>
        <dbReference type="ChEBI" id="CHEBI:58702"/>
    </ligand>
</feature>
<feature type="binding site" evidence="1">
    <location>
        <position position="470"/>
    </location>
    <ligand>
        <name>Mg(2+)</name>
        <dbReference type="ChEBI" id="CHEBI:18420"/>
    </ligand>
</feature>
<feature type="binding site" evidence="2">
    <location>
        <position position="480"/>
    </location>
    <ligand>
        <name>phosphoenolpyruvate</name>
        <dbReference type="ChEBI" id="CHEBI:58702"/>
    </ligand>
</feature>
<feature type="sequence conflict" description="In Ref. 1; AAA21978." evidence="4" ref="1">
    <original>R</original>
    <variation>H</variation>
    <location>
        <position position="116"/>
    </location>
</feature>
<feature type="sequence conflict" description="In Ref. 1; AAA21978." evidence="4" ref="1">
    <original>L</original>
    <variation>R</variation>
    <location>
        <position position="529"/>
    </location>
</feature>
<feature type="sequence conflict" description="In Ref. 1; AAA21978." evidence="4" ref="1">
    <original>AALRQLARP</original>
    <variation>RPLRSWHDPEAIRVF</variation>
    <location>
        <begin position="578"/>
        <end position="586"/>
    </location>
</feature>
<dbReference type="EC" id="2.7.3.9" evidence="1"/>
<dbReference type="EMBL" id="M69036">
    <property type="protein sequence ID" value="AAA21978.1"/>
    <property type="molecule type" value="Genomic_DNA"/>
</dbReference>
<dbReference type="EMBL" id="AM260479">
    <property type="protein sequence ID" value="CAJ91477.1"/>
    <property type="molecule type" value="Genomic_DNA"/>
</dbReference>
<dbReference type="PIR" id="B38120">
    <property type="entry name" value="B38120"/>
</dbReference>
<dbReference type="RefSeq" id="WP_011614460.1">
    <property type="nucleotide sequence ID" value="NC_008313.1"/>
</dbReference>
<dbReference type="SMR" id="P23536"/>
<dbReference type="STRING" id="381666.H16_A0326"/>
<dbReference type="KEGG" id="reh:H16_A0326"/>
<dbReference type="PATRIC" id="fig|381666.6.peg.689"/>
<dbReference type="eggNOG" id="COG1080">
    <property type="taxonomic scope" value="Bacteria"/>
</dbReference>
<dbReference type="HOGENOM" id="CLU_007308_7_0_4"/>
<dbReference type="OrthoDB" id="9765468at2"/>
<dbReference type="Proteomes" id="UP000008210">
    <property type="component" value="Chromosome 1"/>
</dbReference>
<dbReference type="GO" id="GO:0005737">
    <property type="term" value="C:cytoplasm"/>
    <property type="evidence" value="ECO:0007669"/>
    <property type="project" value="UniProtKB-SubCell"/>
</dbReference>
<dbReference type="GO" id="GO:0016301">
    <property type="term" value="F:kinase activity"/>
    <property type="evidence" value="ECO:0007669"/>
    <property type="project" value="UniProtKB-KW"/>
</dbReference>
<dbReference type="GO" id="GO:0046872">
    <property type="term" value="F:metal ion binding"/>
    <property type="evidence" value="ECO:0007669"/>
    <property type="project" value="UniProtKB-KW"/>
</dbReference>
<dbReference type="GO" id="GO:0008965">
    <property type="term" value="F:phosphoenolpyruvate-protein phosphotransferase activity"/>
    <property type="evidence" value="ECO:0007669"/>
    <property type="project" value="UniProtKB-EC"/>
</dbReference>
<dbReference type="GO" id="GO:0009401">
    <property type="term" value="P:phosphoenolpyruvate-dependent sugar phosphotransferase system"/>
    <property type="evidence" value="ECO:0007669"/>
    <property type="project" value="UniProtKB-KW"/>
</dbReference>
<dbReference type="Gene3D" id="3.20.20.60">
    <property type="entry name" value="Phosphoenolpyruvate-binding domains"/>
    <property type="match status" value="1"/>
</dbReference>
<dbReference type="Gene3D" id="3.50.30.10">
    <property type="entry name" value="Phosphohistidine domain"/>
    <property type="match status" value="1"/>
</dbReference>
<dbReference type="Gene3D" id="1.10.274.10">
    <property type="entry name" value="PtsI, HPr-binding domain"/>
    <property type="match status" value="1"/>
</dbReference>
<dbReference type="InterPro" id="IPR008279">
    <property type="entry name" value="PEP-util_enz_mobile_dom"/>
</dbReference>
<dbReference type="InterPro" id="IPR050499">
    <property type="entry name" value="PEP-utilizing_PTS_enzyme"/>
</dbReference>
<dbReference type="InterPro" id="IPR018274">
    <property type="entry name" value="PEP_util_AS"/>
</dbReference>
<dbReference type="InterPro" id="IPR000121">
    <property type="entry name" value="PEP_util_C"/>
</dbReference>
<dbReference type="InterPro" id="IPR023151">
    <property type="entry name" value="PEP_util_CS"/>
</dbReference>
<dbReference type="InterPro" id="IPR036637">
    <property type="entry name" value="Phosphohistidine_dom_sf"/>
</dbReference>
<dbReference type="InterPro" id="IPR024692">
    <property type="entry name" value="PTS_EI"/>
</dbReference>
<dbReference type="InterPro" id="IPR006318">
    <property type="entry name" value="PTS_EI-like"/>
</dbReference>
<dbReference type="InterPro" id="IPR008731">
    <property type="entry name" value="PTS_EIN"/>
</dbReference>
<dbReference type="InterPro" id="IPR036618">
    <property type="entry name" value="PtsI_HPr-bd_sf"/>
</dbReference>
<dbReference type="InterPro" id="IPR015813">
    <property type="entry name" value="Pyrv/PenolPyrv_kinase-like_dom"/>
</dbReference>
<dbReference type="InterPro" id="IPR040442">
    <property type="entry name" value="Pyrv_kinase-like_dom_sf"/>
</dbReference>
<dbReference type="NCBIfam" id="TIGR01417">
    <property type="entry name" value="PTS_I_fam"/>
    <property type="match status" value="1"/>
</dbReference>
<dbReference type="PANTHER" id="PTHR46244">
    <property type="entry name" value="PHOSPHOENOLPYRUVATE-PROTEIN PHOSPHOTRANSFERASE"/>
    <property type="match status" value="1"/>
</dbReference>
<dbReference type="PANTHER" id="PTHR46244:SF3">
    <property type="entry name" value="PHOSPHOENOLPYRUVATE-PROTEIN PHOSPHOTRANSFERASE"/>
    <property type="match status" value="1"/>
</dbReference>
<dbReference type="Pfam" id="PF05524">
    <property type="entry name" value="PEP-utilisers_N"/>
    <property type="match status" value="1"/>
</dbReference>
<dbReference type="Pfam" id="PF00391">
    <property type="entry name" value="PEP-utilizers"/>
    <property type="match status" value="1"/>
</dbReference>
<dbReference type="Pfam" id="PF02896">
    <property type="entry name" value="PEP-utilizers_C"/>
    <property type="match status" value="1"/>
</dbReference>
<dbReference type="PIRSF" id="PIRSF000732">
    <property type="entry name" value="PTS_enzyme_I"/>
    <property type="match status" value="1"/>
</dbReference>
<dbReference type="PRINTS" id="PR01736">
    <property type="entry name" value="PHPHTRNFRASE"/>
</dbReference>
<dbReference type="SUPFAM" id="SSF47831">
    <property type="entry name" value="Enzyme I of the PEP:sugar phosphotransferase system HPr-binding (sub)domain"/>
    <property type="match status" value="1"/>
</dbReference>
<dbReference type="SUPFAM" id="SSF51621">
    <property type="entry name" value="Phosphoenolpyruvate/pyruvate domain"/>
    <property type="match status" value="1"/>
</dbReference>
<dbReference type="SUPFAM" id="SSF52009">
    <property type="entry name" value="Phosphohistidine domain"/>
    <property type="match status" value="1"/>
</dbReference>
<dbReference type="PROSITE" id="PS00742">
    <property type="entry name" value="PEP_ENZYMES_2"/>
    <property type="match status" value="1"/>
</dbReference>
<dbReference type="PROSITE" id="PS00370">
    <property type="entry name" value="PEP_ENZYMES_PHOS_SITE"/>
    <property type="match status" value="1"/>
</dbReference>
<gene>
    <name evidence="3" type="primary">phbI</name>
    <name type="synonym">ptsI</name>
    <name type="ordered locus">H16_A0326</name>
</gene>
<organism>
    <name type="scientific">Cupriavidus necator (strain ATCC 17699 / DSM 428 / KCTC 22496 / NCIMB 10442 / H16 / Stanier 337)</name>
    <name type="common">Ralstonia eutropha</name>
    <dbReference type="NCBI Taxonomy" id="381666"/>
    <lineage>
        <taxon>Bacteria</taxon>
        <taxon>Pseudomonadati</taxon>
        <taxon>Pseudomonadota</taxon>
        <taxon>Betaproteobacteria</taxon>
        <taxon>Burkholderiales</taxon>
        <taxon>Burkholderiaceae</taxon>
        <taxon>Cupriavidus</taxon>
    </lineage>
</organism>